<dbReference type="EMBL" id="AF478687">
    <property type="protein sequence ID" value="AAL78657.1"/>
    <property type="molecule type" value="mRNA"/>
</dbReference>
<dbReference type="EMBL" id="BX284605">
    <property type="protein sequence ID" value="CCD63011.1"/>
    <property type="molecule type" value="Genomic_DNA"/>
</dbReference>
<dbReference type="RefSeq" id="NP_504372.2">
    <property type="nucleotide sequence ID" value="NM_071971.6"/>
</dbReference>
<dbReference type="PDB" id="8HIP">
    <property type="method" value="EM"/>
    <property type="resolution" value="2.77 A"/>
    <property type="chains" value="A/B=1-776"/>
</dbReference>
<dbReference type="PDB" id="8HKE">
    <property type="method" value="EM"/>
    <property type="resolution" value="3.71 A"/>
    <property type="chains" value="A/B=1-776"/>
</dbReference>
<dbReference type="PDB" id="8XBS">
    <property type="method" value="EM"/>
    <property type="resolution" value="2.21 A"/>
    <property type="chains" value="A/B=18-776"/>
</dbReference>
<dbReference type="PDB" id="8XC1">
    <property type="method" value="EM"/>
    <property type="resolution" value="2.21 A"/>
    <property type="chains" value="A/B=18-776"/>
</dbReference>
<dbReference type="PDBsum" id="8HIP"/>
<dbReference type="PDBsum" id="8HKE"/>
<dbReference type="PDBsum" id="8XBS"/>
<dbReference type="PDBsum" id="8XC1"/>
<dbReference type="EMDB" id="EMD-34825"/>
<dbReference type="EMDB" id="EMD-34850"/>
<dbReference type="EMDB" id="EMD-38227"/>
<dbReference type="EMDB" id="EMD-38236"/>
<dbReference type="SMR" id="Q9GZC8"/>
<dbReference type="FunCoup" id="Q9GZC8">
    <property type="interactions" value="163"/>
</dbReference>
<dbReference type="STRING" id="6239.C04F5.1.2"/>
<dbReference type="TCDB" id="1.A.79.1.1">
    <property type="family name" value="the cholesterol uptake protein (chup) or double stranded rna uptake family"/>
</dbReference>
<dbReference type="GlyCosmos" id="Q9GZC8">
    <property type="glycosylation" value="8 sites, No reported glycans"/>
</dbReference>
<dbReference type="iPTMnet" id="Q9GZC8"/>
<dbReference type="PaxDb" id="6239-C04F5.1"/>
<dbReference type="EnsemblMetazoa" id="C04F5.1.1">
    <property type="protein sequence ID" value="C04F5.1.1"/>
    <property type="gene ID" value="WBGene00004795"/>
</dbReference>
<dbReference type="GeneID" id="178900"/>
<dbReference type="KEGG" id="cel:CELE_C04F5.1"/>
<dbReference type="UCSC" id="C04F5.1">
    <property type="organism name" value="c. elegans"/>
</dbReference>
<dbReference type="AGR" id="WB:WBGene00004795"/>
<dbReference type="CTD" id="178900"/>
<dbReference type="WormBase" id="C04F5.1">
    <property type="protein sequence ID" value="CE30331"/>
    <property type="gene ID" value="WBGene00004795"/>
    <property type="gene designation" value="sid-1"/>
</dbReference>
<dbReference type="eggNOG" id="ENOG502QUXZ">
    <property type="taxonomic scope" value="Eukaryota"/>
</dbReference>
<dbReference type="GeneTree" id="ENSGT00390000010091"/>
<dbReference type="HOGENOM" id="CLU_373491_0_0_1"/>
<dbReference type="InParanoid" id="Q9GZC8"/>
<dbReference type="OMA" id="MANRDEM"/>
<dbReference type="OrthoDB" id="416618at2759"/>
<dbReference type="PhylomeDB" id="Q9GZC8"/>
<dbReference type="PRO" id="PR:Q9GZC8"/>
<dbReference type="Proteomes" id="UP000001940">
    <property type="component" value="Chromosome V"/>
</dbReference>
<dbReference type="Bgee" id="WBGene00004795">
    <property type="expression patterns" value="Expressed in germ line (C elegans) and 4 other cell types or tissues"/>
</dbReference>
<dbReference type="GO" id="GO:0005764">
    <property type="term" value="C:lysosome"/>
    <property type="evidence" value="ECO:0000318"/>
    <property type="project" value="GO_Central"/>
</dbReference>
<dbReference type="GO" id="GO:0016020">
    <property type="term" value="C:membrane"/>
    <property type="evidence" value="ECO:0000303"/>
    <property type="project" value="UniProtKB"/>
</dbReference>
<dbReference type="GO" id="GO:0005886">
    <property type="term" value="C:plasma membrane"/>
    <property type="evidence" value="ECO:0000314"/>
    <property type="project" value="WormBase"/>
</dbReference>
<dbReference type="GO" id="GO:0003725">
    <property type="term" value="F:double-stranded RNA binding"/>
    <property type="evidence" value="ECO:0000314"/>
    <property type="project" value="WormBase"/>
</dbReference>
<dbReference type="GO" id="GO:0051033">
    <property type="term" value="F:RNA transmembrane transporter activity"/>
    <property type="evidence" value="ECO:0000314"/>
    <property type="project" value="WormBase"/>
</dbReference>
<dbReference type="GO" id="GO:0033227">
    <property type="term" value="P:dsRNA transport"/>
    <property type="evidence" value="ECO:0000314"/>
    <property type="project" value="WormBase"/>
</dbReference>
<dbReference type="GO" id="GO:0035194">
    <property type="term" value="P:regulatory ncRNA-mediated post-transcriptional gene silencing"/>
    <property type="evidence" value="ECO:0000314"/>
    <property type="project" value="WormBase"/>
</dbReference>
<dbReference type="GO" id="GO:0050658">
    <property type="term" value="P:RNA transport"/>
    <property type="evidence" value="ECO:0000318"/>
    <property type="project" value="GO_Central"/>
</dbReference>
<dbReference type="InterPro" id="IPR025958">
    <property type="entry name" value="SID1_TM_fam"/>
</dbReference>
<dbReference type="PANTHER" id="PTHR12185">
    <property type="entry name" value="SID1 TRANSMEMBRANE FAMILY MEMEBER"/>
    <property type="match status" value="1"/>
</dbReference>
<dbReference type="PANTHER" id="PTHR12185:SF1">
    <property type="entry name" value="SYSTEMIC RNA INTERFERENCE DEFECTIVE PROTEIN 1"/>
    <property type="match status" value="1"/>
</dbReference>
<dbReference type="Pfam" id="PF13965">
    <property type="entry name" value="SID-1_RNA_chan"/>
    <property type="match status" value="1"/>
</dbReference>
<reference evidence="17" key="1">
    <citation type="journal article" date="2002" name="Science">
        <title>Systemic RNAi in C. elegans requires the putative transmembrane protein SID-1.</title>
        <authorList>
            <person name="Winston W.M."/>
            <person name="Molodowitch C."/>
            <person name="Hunter C.P."/>
        </authorList>
    </citation>
    <scope>NUCLEOTIDE SEQUENCE [MRNA]</scope>
    <scope>FUNCTION</scope>
    <scope>SUBCELLULAR LOCATION</scope>
    <scope>TISSUE SPECIFICITY</scope>
    <scope>DEVELOPMENTAL STAGE</scope>
    <scope>MUTAGENESIS OF PRO-199; SER-536 AND ARG-565</scope>
    <source>
        <strain evidence="3">Bristol N2</strain>
    </source>
</reference>
<reference key="2">
    <citation type="journal article" date="2004" name="Curr. Biol.">
        <title>Genes required for systemic RNA interference in Caenorhabditis elegans.</title>
        <authorList>
            <person name="Tijsterman M."/>
            <person name="May R.C."/>
            <person name="Simmer F."/>
            <person name="Okihara K.L."/>
            <person name="Plasterk R.H."/>
        </authorList>
    </citation>
    <scope>NUCLEOTIDE SEQUENCE [MRNA]</scope>
    <scope>FUNCTION</scope>
</reference>
<reference key="3">
    <citation type="journal article" date="1998" name="Science">
        <title>Genome sequence of the nematode C. elegans: a platform for investigating biology.</title>
        <authorList>
            <consortium name="The C. elegans sequencing consortium"/>
        </authorList>
    </citation>
    <scope>NUCLEOTIDE SEQUENCE [LARGE SCALE GENOMIC DNA]</scope>
    <source>
        <strain>Bristol N2</strain>
    </source>
</reference>
<reference evidence="17" key="4">
    <citation type="journal article" date="2003" name="Science">
        <title>Transport of dsRNA into cells by the transmembrane protein SID-1.</title>
        <authorList>
            <person name="Feinberg E.H."/>
            <person name="Hunter C.P."/>
        </authorList>
    </citation>
    <scope>FUNCTION</scope>
    <scope>SUBCELLULAR LOCATION</scope>
    <scope>DISRUPTION PHENOTYPE</scope>
</reference>
<reference key="5">
    <citation type="journal article" date="2006" name="Cold Spring Harb. Symp. Quant. Biol.">
        <title>Systemic RNAi in Caenorhabditis elegans.</title>
        <authorList>
            <person name="Hunter C.P."/>
            <person name="Winston W.M."/>
            <person name="Molodowitch C."/>
            <person name="Feinberg E.H."/>
            <person name="Shih J."/>
            <person name="Sutherlin M."/>
            <person name="Wright A.J."/>
            <person name="Fitzgerald M.C."/>
        </authorList>
    </citation>
    <scope>FUNCTION</scope>
    <scope>SUBCELLULAR LOCATION</scope>
    <scope>TISSUE SPECIFICITY</scope>
    <scope>DEVELOPMENTAL STAGE</scope>
</reference>
<reference key="6">
    <citation type="journal article" date="2007" name="Mol. Cell. Proteomics">
        <title>Proteomics reveals N-linked glycoprotein diversity in Caenorhabditis elegans and suggests an atypical translocation mechanism for integral membrane proteins.</title>
        <authorList>
            <person name="Kaji H."/>
            <person name="Kamiie J."/>
            <person name="Kawakami H."/>
            <person name="Kido K."/>
            <person name="Yamauchi Y."/>
            <person name="Shinkawa T."/>
            <person name="Taoka M."/>
            <person name="Takahashi N."/>
            <person name="Isobe T."/>
        </authorList>
    </citation>
    <scope>GLYCOSYLATION [LARGE SCALE ANALYSIS] AT ASN-290</scope>
    <scope>IDENTIFICATION BY MASS SPECTROMETRY</scope>
    <source>
        <strain>Bristol N2</strain>
    </source>
</reference>
<reference key="7">
    <citation type="journal article" date="2009" name="Proc. Natl. Acad. Sci. U.S.A.">
        <title>Export of RNA silencing from C. elegans tissues does not require the RNA channel SID-1.</title>
        <authorList>
            <person name="Jose A.M."/>
            <person name="Smith J.J."/>
            <person name="Hunter C.P."/>
        </authorList>
    </citation>
    <scope>FUNCTION</scope>
    <scope>DISRUPTION PHENOTYPE</scope>
</reference>
<reference key="8">
    <citation type="journal article" date="2009" name="RNA">
        <title>The SID-1 double-stranded RNA transporter is not selective for dsRNA length.</title>
        <authorList>
            <person name="Shih J.D."/>
            <person name="Fitzgerald M.C."/>
            <person name="Sutherlin M."/>
            <person name="Hunter C.P."/>
        </authorList>
    </citation>
    <scope>FUNCTION</scope>
    <scope>SUBUNIT</scope>
    <scope>MUTAGENESIS OF SER-536</scope>
</reference>
<reference key="9">
    <citation type="journal article" date="2010" name="Nat. Methods">
        <title>Enhanced neuronal RNAi in C. elegans using SID-1.</title>
        <authorList>
            <person name="Calixto A."/>
            <person name="Chelur D."/>
            <person name="Topalidou I."/>
            <person name="Chen X."/>
            <person name="Chalfie M."/>
        </authorList>
    </citation>
    <scope>FUNCTION</scope>
</reference>
<reference key="10">
    <citation type="journal article" date="2011" name="RNA">
        <title>SID-1 is a dsRNA-selective dsRNA-gated channel.</title>
        <authorList>
            <person name="Shih J.D."/>
            <person name="Hunter C.P."/>
        </authorList>
    </citation>
    <scope>FUNCTION</scope>
    <scope>MUTAGENESIS OF SER-536</scope>
</reference>
<reference key="11">
    <citation type="journal article" date="2012" name="Insect Biochem. Mol. Biol.">
        <title>SID-1 protein of Caenorhabditis elegans mediates uptake of dsRNA into Bombyx cells.</title>
        <authorList>
            <person name="Kobayashi I."/>
            <person name="Tsukioka H."/>
            <person name="Komoto N."/>
            <person name="Uchino K."/>
            <person name="Sezutsu H."/>
            <person name="Tamura T."/>
            <person name="Kusakabe T."/>
            <person name="Tomita S."/>
        </authorList>
    </citation>
    <scope>FUNCTION</scope>
</reference>
<reference key="12">
    <citation type="journal article" date="2012" name="Mol. Cell">
        <title>Uptake of extracellular double-stranded RNA by SID-2.</title>
        <authorList>
            <person name="McEwan D.L."/>
            <person name="Weisman A.S."/>
            <person name="Hunter C.P."/>
        </authorList>
    </citation>
    <scope>FUNCTION</scope>
    <scope>MUTAGENESIS OF SER-536</scope>
</reference>
<reference key="13">
    <citation type="journal article" date="2012" name="RNA Biol.">
        <title>Effective RNA interference in cultured silkworm cells mediated by overexpression of Caenorhabditis elegans SID-1.</title>
        <authorList>
            <person name="Mon H."/>
            <person name="Kobayashi I."/>
            <person name="Ohkubo S."/>
            <person name="Tomita S."/>
            <person name="Lee J."/>
            <person name="Sezutsu H."/>
            <person name="Tamura T."/>
            <person name="Kusakabe T."/>
        </authorList>
    </citation>
    <scope>FUNCTION</scope>
</reference>
<reference key="14">
    <citation type="journal article" date="2015" name="J. Biol. Chem.">
        <title>Systemic RNA interference deficiency-1 (SID-1) extracellular domain selectively binds long double-stranded RNA and is required for RNA transport by SID-1.</title>
        <authorList>
            <person name="Li W."/>
            <person name="Koutmou K.S."/>
            <person name="Leahy D.J."/>
            <person name="Li M."/>
        </authorList>
    </citation>
    <scope>FUNCTION</scope>
    <scope>MUTAGENESIS OF ALA-173 AND PRO-199</scope>
</reference>
<reference key="15">
    <citation type="journal article" date="2020" name="Nature">
        <title>C. elegans interprets bacterial non-coding RNAs to learn pathogenic avoidance.</title>
        <authorList>
            <person name="Kaletsky R."/>
            <person name="Moore R.S."/>
            <person name="Vrla G.D."/>
            <person name="Parsons L.R."/>
            <person name="Gitai Z."/>
            <person name="Murphy C.T."/>
        </authorList>
    </citation>
    <scope>FUNCTION</scope>
    <scope>MUTAGENESIS OF ASP-130</scope>
</reference>
<comment type="function">
    <text evidence="3 4 5 6 8 9 10 11 12 13 14 15 16">Plays a role in RNA-mediated gene silencing by acting cell-autonomously as a channel for the transport of double-stranded RNA (dsRNA) between cells. Mediates the spread of dsRNA and subsequent silencing of genes in cells distant from the site of dsRNA introduction. Selective for dsRNA. Preferentially binds long dsRNA, from 50 base pairs up to 700. Short 20 base-pair long molecules are not bound. May also bind dsDNA, but with lower affinity. Binding may be sequence-independent (PubMed:26067272). Required for avoidance behavior induced by small RNAs derived from pathogenic bacteria such as P.aeruginosa (PubMed:32908307).</text>
</comment>
<comment type="subunit">
    <text evidence="8">May self-associate to form multimers.</text>
</comment>
<comment type="subcellular location">
    <subcellularLocation>
        <location evidence="3 4 6">Cell membrane</location>
        <topology evidence="3 4 6">Multi-pass membrane protein</topology>
    </subcellularLocation>
    <text>Enriched at the cell periphery and also to the punctate structures of cytoplasm.</text>
</comment>
<comment type="tissue specificity">
    <text evidence="3 6">Expressed in most non-neuronal cells, including body wall muscle cells.</text>
</comment>
<comment type="developmental stage">
    <text evidence="3 6">Expressed throughout all developmental stages.</text>
</comment>
<comment type="disruption phenotype">
    <text evidence="4 9">Absence of silencing in adjacent cells or tissues. Decrease in transgene silencing when combined with eri-1.</text>
</comment>
<comment type="miscellaneous">
    <text evidence="16">This avoidance behavior is transgenerationally inherited, and thus progeny display this same aversion despite never been exposed to this pathogenic bacteria.</text>
</comment>
<comment type="similarity">
    <text evidence="17">Belongs to the SID1 family.</text>
</comment>
<gene>
    <name evidence="18" type="primary">sid-1</name>
    <name evidence="18" type="synonym">rde-7</name>
    <name evidence="18" type="synonym">rsd-8</name>
    <name evidence="18" type="ORF">C04F5.1</name>
</gene>
<keyword id="KW-0002">3D-structure</keyword>
<keyword id="KW-1003">Cell membrane</keyword>
<keyword id="KW-0325">Glycoprotein</keyword>
<keyword id="KW-0472">Membrane</keyword>
<keyword id="KW-1185">Reference proteome</keyword>
<keyword id="KW-0694">RNA-binding</keyword>
<keyword id="KW-0943">RNA-mediated gene silencing</keyword>
<keyword id="KW-0732">Signal</keyword>
<keyword id="KW-0812">Transmembrane</keyword>
<keyword id="KW-1133">Transmembrane helix</keyword>
<keyword id="KW-0813">Transport</keyword>
<accession>Q9GZC8</accession>
<name>SID1_CAEEL</name>
<evidence type="ECO:0000255" key="1"/>
<evidence type="ECO:0000256" key="2">
    <source>
        <dbReference type="SAM" id="MobiDB-lite"/>
    </source>
</evidence>
<evidence type="ECO:0000269" key="3">
    <source>
    </source>
</evidence>
<evidence type="ECO:0000269" key="4">
    <source>
    </source>
</evidence>
<evidence type="ECO:0000269" key="5">
    <source>
    </source>
</evidence>
<evidence type="ECO:0000269" key="6">
    <source>
    </source>
</evidence>
<evidence type="ECO:0000269" key="7">
    <source>
    </source>
</evidence>
<evidence type="ECO:0000269" key="8">
    <source>
    </source>
</evidence>
<evidence type="ECO:0000269" key="9">
    <source>
    </source>
</evidence>
<evidence type="ECO:0000269" key="10">
    <source>
    </source>
</evidence>
<evidence type="ECO:0000269" key="11">
    <source>
    </source>
</evidence>
<evidence type="ECO:0000269" key="12">
    <source>
    </source>
</evidence>
<evidence type="ECO:0000269" key="13">
    <source>
    </source>
</evidence>
<evidence type="ECO:0000269" key="14">
    <source>
    </source>
</evidence>
<evidence type="ECO:0000269" key="15">
    <source>
    </source>
</evidence>
<evidence type="ECO:0000269" key="16">
    <source>
    </source>
</evidence>
<evidence type="ECO:0000305" key="17"/>
<evidence type="ECO:0000312" key="18">
    <source>
        <dbReference type="WormBase" id="C04F5.1"/>
    </source>
</evidence>
<evidence type="ECO:0007829" key="19">
    <source>
        <dbReference type="PDB" id="8HIP"/>
    </source>
</evidence>
<evidence type="ECO:0007829" key="20">
    <source>
        <dbReference type="PDB" id="8XBS"/>
    </source>
</evidence>
<evidence type="ECO:0007829" key="21">
    <source>
        <dbReference type="PDB" id="8XC1"/>
    </source>
</evidence>
<organism>
    <name type="scientific">Caenorhabditis elegans</name>
    <dbReference type="NCBI Taxonomy" id="6239"/>
    <lineage>
        <taxon>Eukaryota</taxon>
        <taxon>Metazoa</taxon>
        <taxon>Ecdysozoa</taxon>
        <taxon>Nematoda</taxon>
        <taxon>Chromadorea</taxon>
        <taxon>Rhabditida</taxon>
        <taxon>Rhabditina</taxon>
        <taxon>Rhabditomorpha</taxon>
        <taxon>Rhabditoidea</taxon>
        <taxon>Rhabditidae</taxon>
        <taxon>Peloderinae</taxon>
        <taxon>Caenorhabditis</taxon>
    </lineage>
</organism>
<protein>
    <recommendedName>
        <fullName>Systemic RNA interference defective protein 1</fullName>
    </recommendedName>
    <alternativeName>
        <fullName>Systemic RNAi enabling protein</fullName>
    </alternativeName>
</protein>
<feature type="signal peptide" evidence="1">
    <location>
        <begin position="1"/>
        <end position="17"/>
    </location>
</feature>
<feature type="chain" id="PRO_0000032574" description="Systemic RNA interference defective protein 1">
    <location>
        <begin position="18"/>
        <end position="776"/>
    </location>
</feature>
<feature type="topological domain" description="Extracellular" evidence="1">
    <location>
        <begin position="18"/>
        <end position="319"/>
    </location>
</feature>
<feature type="transmembrane region" description="Helical" evidence="1">
    <location>
        <begin position="320"/>
        <end position="340"/>
    </location>
</feature>
<feature type="topological domain" description="Cytoplasmic" evidence="1">
    <location>
        <begin position="341"/>
        <end position="429"/>
    </location>
</feature>
<feature type="transmembrane region" description="Helical" evidence="1">
    <location>
        <begin position="430"/>
        <end position="450"/>
    </location>
</feature>
<feature type="topological domain" description="Extracellular" evidence="1">
    <location>
        <begin position="451"/>
        <end position="481"/>
    </location>
</feature>
<feature type="transmembrane region" description="Helical" evidence="1">
    <location>
        <begin position="482"/>
        <end position="502"/>
    </location>
</feature>
<feature type="topological domain" description="Cytoplasmic" evidence="1">
    <location>
        <begin position="503"/>
        <end position="510"/>
    </location>
</feature>
<feature type="transmembrane region" description="Helical" evidence="1">
    <location>
        <begin position="511"/>
        <end position="531"/>
    </location>
</feature>
<feature type="topological domain" description="Extracellular" evidence="1">
    <location>
        <begin position="532"/>
        <end position="543"/>
    </location>
</feature>
<feature type="transmembrane region" description="Helical" evidence="1">
    <location>
        <begin position="544"/>
        <end position="564"/>
    </location>
</feature>
<feature type="topological domain" description="Cytoplasmic" evidence="1">
    <location>
        <begin position="565"/>
        <end position="575"/>
    </location>
</feature>
<feature type="transmembrane region" description="Helical" evidence="1">
    <location>
        <begin position="576"/>
        <end position="596"/>
    </location>
</feature>
<feature type="topological domain" description="Extracellular" evidence="1">
    <location>
        <begin position="597"/>
        <end position="599"/>
    </location>
</feature>
<feature type="transmembrane region" description="Helical" evidence="1">
    <location>
        <begin position="600"/>
        <end position="620"/>
    </location>
</feature>
<feature type="topological domain" description="Cytoplasmic" evidence="1">
    <location>
        <begin position="621"/>
        <end position="633"/>
    </location>
</feature>
<feature type="transmembrane region" description="Helical" evidence="1">
    <location>
        <begin position="634"/>
        <end position="654"/>
    </location>
</feature>
<feature type="topological domain" description="Extracellular" evidence="1">
    <location>
        <begin position="655"/>
        <end position="659"/>
    </location>
</feature>
<feature type="transmembrane region" description="Helical" evidence="1">
    <location>
        <begin position="660"/>
        <end position="680"/>
    </location>
</feature>
<feature type="topological domain" description="Cytoplasmic" evidence="1">
    <location>
        <begin position="681"/>
        <end position="691"/>
    </location>
</feature>
<feature type="transmembrane region" description="Helical" evidence="1">
    <location>
        <begin position="692"/>
        <end position="712"/>
    </location>
</feature>
<feature type="topological domain" description="Extracellular" evidence="1">
    <location>
        <begin position="713"/>
        <end position="741"/>
    </location>
</feature>
<feature type="transmembrane region" description="Helical" evidence="1">
    <location>
        <begin position="742"/>
        <end position="762"/>
    </location>
</feature>
<feature type="topological domain" description="Cytoplasmic" evidence="1">
    <location>
        <begin position="763"/>
        <end position="776"/>
    </location>
</feature>
<feature type="region of interest" description="Involved in dsRNA-binding" evidence="15">
    <location>
        <begin position="22"/>
        <end position="312"/>
    </location>
</feature>
<feature type="region of interest" description="Disordered" evidence="2">
    <location>
        <begin position="360"/>
        <end position="390"/>
    </location>
</feature>
<feature type="compositionally biased region" description="Basic and acidic residues" evidence="2">
    <location>
        <begin position="362"/>
        <end position="373"/>
    </location>
</feature>
<feature type="glycosylation site" description="N-linked (GlcNAc...) asparagine" evidence="1">
    <location>
        <position position="19"/>
    </location>
</feature>
<feature type="glycosylation site" description="N-linked (GlcNAc...) asparagine" evidence="1">
    <location>
        <position position="20"/>
    </location>
</feature>
<feature type="glycosylation site" description="N-linked (GlcNAc...) asparagine" evidence="1">
    <location>
        <position position="32"/>
    </location>
</feature>
<feature type="glycosylation site" description="N-linked (GlcNAc...) asparagine" evidence="1">
    <location>
        <position position="205"/>
    </location>
</feature>
<feature type="glycosylation site" description="N-linked (GlcNAc...) asparagine" evidence="1">
    <location>
        <position position="210"/>
    </location>
</feature>
<feature type="glycosylation site" description="N-linked (GlcNAc...) asparagine" evidence="1">
    <location>
        <position position="234"/>
    </location>
</feature>
<feature type="glycosylation site" description="N-linked (GlcNAc...) asparagine" evidence="7">
    <location>
        <position position="290"/>
    </location>
</feature>
<feature type="glycosylation site" description="N-linked (GlcNAc...) asparagine" evidence="1">
    <location>
        <position position="311"/>
    </location>
</feature>
<feature type="mutagenesis site" description="In pk3321; defective avoidance behavior in response to P.aeruginosa." evidence="16">
    <original>D</original>
    <variation>N</variation>
    <location>
        <position position="130"/>
    </location>
</feature>
<feature type="mutagenesis site" description="Loss of binding to shorter than 100 base-pair long dsRNA and decreased affinity for longer RNA species. Decreased RNA transport." evidence="15">
    <original>A</original>
    <variation>T</variation>
    <location>
        <position position="173"/>
    </location>
</feature>
<feature type="mutagenesis site" description="In qt10; Failure to spread gene silencing signal. Loss of binding to shorter than 100 base-pair long dsRNA and decreased affinity for longer RNA species. Decreased RNA transport." evidence="3 15">
    <original>P</original>
    <variation>L</variation>
    <location>
        <position position="199"/>
    </location>
</feature>
<feature type="mutagenesis site" description="In qt2; Defective in dsRNA transport." evidence="3 8 11 14">
    <original>S</original>
    <variation>I</variation>
    <location>
        <position position="536"/>
    </location>
</feature>
<feature type="mutagenesis site" description="In qt4; Failure to spread gene silencing signal." evidence="3">
    <original>R</original>
    <variation>C</variation>
    <location>
        <position position="565"/>
    </location>
</feature>
<feature type="strand" evidence="20">
    <location>
        <begin position="35"/>
        <end position="39"/>
    </location>
</feature>
<feature type="strand" evidence="20">
    <location>
        <begin position="46"/>
        <end position="51"/>
    </location>
</feature>
<feature type="strand" evidence="20">
    <location>
        <begin position="56"/>
        <end position="63"/>
    </location>
</feature>
<feature type="helix" evidence="20">
    <location>
        <begin position="65"/>
        <end position="67"/>
    </location>
</feature>
<feature type="strand" evidence="20">
    <location>
        <begin position="72"/>
        <end position="80"/>
    </location>
</feature>
<feature type="helix" evidence="20">
    <location>
        <begin position="81"/>
        <end position="84"/>
    </location>
</feature>
<feature type="strand" evidence="20">
    <location>
        <begin position="91"/>
        <end position="97"/>
    </location>
</feature>
<feature type="strand" evidence="20">
    <location>
        <begin position="102"/>
        <end position="110"/>
    </location>
</feature>
<feature type="strand" evidence="20">
    <location>
        <begin position="115"/>
        <end position="123"/>
    </location>
</feature>
<feature type="helix" evidence="20">
    <location>
        <begin position="128"/>
        <end position="130"/>
    </location>
</feature>
<feature type="strand" evidence="20">
    <location>
        <begin position="147"/>
        <end position="154"/>
    </location>
</feature>
<feature type="strand" evidence="21">
    <location>
        <begin position="157"/>
        <end position="159"/>
    </location>
</feature>
<feature type="strand" evidence="20">
    <location>
        <begin position="161"/>
        <end position="169"/>
    </location>
</feature>
<feature type="turn" evidence="20">
    <location>
        <begin position="172"/>
        <end position="174"/>
    </location>
</feature>
<feature type="strand" evidence="20">
    <location>
        <begin position="186"/>
        <end position="194"/>
    </location>
</feature>
<feature type="strand" evidence="20">
    <location>
        <begin position="196"/>
        <end position="198"/>
    </location>
</feature>
<feature type="strand" evidence="20">
    <location>
        <begin position="200"/>
        <end position="205"/>
    </location>
</feature>
<feature type="helix" evidence="20">
    <location>
        <begin position="206"/>
        <end position="209"/>
    </location>
</feature>
<feature type="strand" evidence="20">
    <location>
        <begin position="214"/>
        <end position="219"/>
    </location>
</feature>
<feature type="strand" evidence="20">
    <location>
        <begin position="226"/>
        <end position="232"/>
    </location>
</feature>
<feature type="strand" evidence="20">
    <location>
        <begin position="237"/>
        <end position="239"/>
    </location>
</feature>
<feature type="strand" evidence="20">
    <location>
        <begin position="241"/>
        <end position="243"/>
    </location>
</feature>
<feature type="turn" evidence="19">
    <location>
        <begin position="244"/>
        <end position="246"/>
    </location>
</feature>
<feature type="strand" evidence="20">
    <location>
        <begin position="251"/>
        <end position="263"/>
    </location>
</feature>
<feature type="helix" evidence="20">
    <location>
        <begin position="265"/>
        <end position="271"/>
    </location>
</feature>
<feature type="strand" evidence="20">
    <location>
        <begin position="273"/>
        <end position="280"/>
    </location>
</feature>
<feature type="turn" evidence="20">
    <location>
        <begin position="285"/>
        <end position="287"/>
    </location>
</feature>
<feature type="strand" evidence="20">
    <location>
        <begin position="300"/>
        <end position="308"/>
    </location>
</feature>
<feature type="helix" evidence="20">
    <location>
        <begin position="315"/>
        <end position="326"/>
    </location>
</feature>
<feature type="helix" evidence="20">
    <location>
        <begin position="327"/>
        <end position="331"/>
    </location>
</feature>
<feature type="turn" evidence="20">
    <location>
        <begin position="332"/>
        <end position="335"/>
    </location>
</feature>
<feature type="helix" evidence="20">
    <location>
        <begin position="336"/>
        <end position="342"/>
    </location>
</feature>
<feature type="helix" evidence="20">
    <location>
        <begin position="427"/>
        <end position="430"/>
    </location>
</feature>
<feature type="strand" evidence="19">
    <location>
        <begin position="431"/>
        <end position="433"/>
    </location>
</feature>
<feature type="helix" evidence="20">
    <location>
        <begin position="436"/>
        <end position="438"/>
    </location>
</feature>
<feature type="helix" evidence="20">
    <location>
        <begin position="439"/>
        <end position="453"/>
    </location>
</feature>
<feature type="helix" evidence="20">
    <location>
        <begin position="457"/>
        <end position="463"/>
    </location>
</feature>
<feature type="helix" evidence="20">
    <location>
        <begin position="468"/>
        <end position="470"/>
    </location>
</feature>
<feature type="helix" evidence="20">
    <location>
        <begin position="480"/>
        <end position="484"/>
    </location>
</feature>
<feature type="helix" evidence="20">
    <location>
        <begin position="487"/>
        <end position="503"/>
    </location>
</feature>
<feature type="strand" evidence="20">
    <location>
        <begin position="512"/>
        <end position="515"/>
    </location>
</feature>
<feature type="helix" evidence="20">
    <location>
        <begin position="519"/>
        <end position="539"/>
    </location>
</feature>
<feature type="helix" evidence="20">
    <location>
        <begin position="553"/>
        <end position="568"/>
    </location>
</feature>
<feature type="turn" evidence="20">
    <location>
        <begin position="569"/>
        <end position="571"/>
    </location>
</feature>
<feature type="helix" evidence="20">
    <location>
        <begin position="578"/>
        <end position="595"/>
    </location>
</feature>
<feature type="turn" evidence="20">
    <location>
        <begin position="596"/>
        <end position="598"/>
    </location>
</feature>
<feature type="strand" evidence="19">
    <location>
        <begin position="599"/>
        <end position="601"/>
    </location>
</feature>
<feature type="helix" evidence="20">
    <location>
        <begin position="602"/>
        <end position="625"/>
    </location>
</feature>
<feature type="helix" evidence="20">
    <location>
        <begin position="629"/>
        <end position="651"/>
    </location>
</feature>
<feature type="helix" evidence="20">
    <location>
        <begin position="658"/>
        <end position="660"/>
    </location>
</feature>
<feature type="helix" evidence="20">
    <location>
        <begin position="661"/>
        <end position="683"/>
    </location>
</feature>
<feature type="helix" evidence="20">
    <location>
        <begin position="690"/>
        <end position="710"/>
    </location>
</feature>
<feature type="strand" evidence="19">
    <location>
        <begin position="717"/>
        <end position="719"/>
    </location>
</feature>
<feature type="helix" evidence="20">
    <location>
        <begin position="721"/>
        <end position="725"/>
    </location>
</feature>
<feature type="turn" evidence="20">
    <location>
        <begin position="734"/>
        <end position="736"/>
    </location>
</feature>
<feature type="helix" evidence="20">
    <location>
        <begin position="739"/>
        <end position="760"/>
    </location>
</feature>
<feature type="helix" evidence="20">
    <location>
        <begin position="763"/>
        <end position="765"/>
    </location>
</feature>
<feature type="strand" evidence="21">
    <location>
        <begin position="766"/>
        <end position="769"/>
    </location>
</feature>
<feature type="turn" evidence="20">
    <location>
        <begin position="770"/>
        <end position="772"/>
    </location>
</feature>
<sequence length="776" mass="87931">MIRVYLIILMHLVIGLTQNNSTTPSPIITSSNSSVLVFEISSKMKMIEKKLEANTVHVLRLELDQSFILDLTKVAAEIVDSSKYSKEDGVILEVTVSNGRDSFLLKLPTVYPNLKLYTDGKLLNPLVEQDFGAHRKRHRIGDPHFHQNLIVTVQSRLNADIDYRLHVTHLDRAQYDFLKFKTGQTTKTLSNQKLTFVKPIGFFLNCSEQNISQFHVTLYSEDDICANLITVPANESIYDRSVISDKTHNRRVLSFTKRADIFFTETEISMFKSFRIFVFIAPDDSGCSTNTSRKSFNEKKKISFEFKKLENQSYAVPTALMMIFLTTPCLLFLPIVINIIKNSRKLAPSQSNLISFSPVPSEQRDMDLSHDEQQNTSSELENNGEIPAAENQIVEEITAENQETSVEEGNREIQVKIPLKQDSLSLHGQMLQYPVAIILPVLMHTAIEFHKWTTSTMANRDEMCFHNHACARPLGELRAWNNIITNIGYTLYGAIFIVLSICRRGRHEYSHVFGTYECTLLDVTIGVFMVLQSIASATYHICPSDVAFQFDTPCIQVICGLLMVRQWFVRHESPSPAYTNILLVGVVSLNFLISAFSKTSYVRFIIAVIHVIVVGSICLAKERSLGSEKLKTRFFIMAFSMGNFAAIVMYLTLSAFHLNQIATYCFIINCIMYLMYYGCMKVLHSERITSKAKLCGALSLLAWAVAGFFFFQDDTDWTRSAAASRALNKPCLLLGFFGSHDLWHIFGALAGLFTFIFVSFVDDDLINTRKTSINIF</sequence>
<proteinExistence type="evidence at protein level"/>